<feature type="chain" id="PRO_0000310057" description="Large ribosomal subunit protein uL2">
    <location>
        <begin position="1"/>
        <end position="246"/>
    </location>
</feature>
<feature type="region of interest" description="Disordered" evidence="2">
    <location>
        <begin position="197"/>
        <end position="226"/>
    </location>
</feature>
<gene>
    <name evidence="1" type="primary">rpl2</name>
    <name type="ordered locus">Pisl_1094</name>
</gene>
<organism>
    <name type="scientific">Pyrobaculum islandicum (strain DSM 4184 / JCM 9189 / GEO3)</name>
    <dbReference type="NCBI Taxonomy" id="384616"/>
    <lineage>
        <taxon>Archaea</taxon>
        <taxon>Thermoproteota</taxon>
        <taxon>Thermoprotei</taxon>
        <taxon>Thermoproteales</taxon>
        <taxon>Thermoproteaceae</taxon>
        <taxon>Pyrobaculum</taxon>
    </lineage>
</organism>
<proteinExistence type="inferred from homology"/>
<dbReference type="EMBL" id="CP000504">
    <property type="protein sequence ID" value="ABL88266.1"/>
    <property type="molecule type" value="Genomic_DNA"/>
</dbReference>
<dbReference type="RefSeq" id="WP_011762841.1">
    <property type="nucleotide sequence ID" value="NC_008701.1"/>
</dbReference>
<dbReference type="SMR" id="A1RTI4"/>
<dbReference type="STRING" id="384616.Pisl_1094"/>
<dbReference type="GeneID" id="4616930"/>
<dbReference type="KEGG" id="pis:Pisl_1094"/>
<dbReference type="eggNOG" id="arCOG04067">
    <property type="taxonomic scope" value="Archaea"/>
</dbReference>
<dbReference type="HOGENOM" id="CLU_036235_0_3_2"/>
<dbReference type="OrthoDB" id="5987at2157"/>
<dbReference type="Proteomes" id="UP000002595">
    <property type="component" value="Chromosome"/>
</dbReference>
<dbReference type="GO" id="GO:0022625">
    <property type="term" value="C:cytosolic large ribosomal subunit"/>
    <property type="evidence" value="ECO:0007669"/>
    <property type="project" value="TreeGrafter"/>
</dbReference>
<dbReference type="GO" id="GO:0019843">
    <property type="term" value="F:rRNA binding"/>
    <property type="evidence" value="ECO:0007669"/>
    <property type="project" value="UniProtKB-UniRule"/>
</dbReference>
<dbReference type="GO" id="GO:0003735">
    <property type="term" value="F:structural constituent of ribosome"/>
    <property type="evidence" value="ECO:0007669"/>
    <property type="project" value="InterPro"/>
</dbReference>
<dbReference type="GO" id="GO:0002181">
    <property type="term" value="P:cytoplasmic translation"/>
    <property type="evidence" value="ECO:0007669"/>
    <property type="project" value="TreeGrafter"/>
</dbReference>
<dbReference type="FunFam" id="2.30.30.30:FF:000006">
    <property type="entry name" value="60S ribosomal protein L8"/>
    <property type="match status" value="1"/>
</dbReference>
<dbReference type="Gene3D" id="2.30.30.30">
    <property type="match status" value="1"/>
</dbReference>
<dbReference type="Gene3D" id="2.40.50.140">
    <property type="entry name" value="Nucleic acid-binding proteins"/>
    <property type="match status" value="1"/>
</dbReference>
<dbReference type="Gene3D" id="4.10.950.10">
    <property type="entry name" value="Ribosomal protein L2, domain 3"/>
    <property type="match status" value="1"/>
</dbReference>
<dbReference type="HAMAP" id="MF_01320_A">
    <property type="entry name" value="Ribosomal_uL2_A"/>
    <property type="match status" value="1"/>
</dbReference>
<dbReference type="InterPro" id="IPR012340">
    <property type="entry name" value="NA-bd_OB-fold"/>
</dbReference>
<dbReference type="InterPro" id="IPR014722">
    <property type="entry name" value="Rib_uL2_dom2"/>
</dbReference>
<dbReference type="InterPro" id="IPR002171">
    <property type="entry name" value="Ribosomal_uL2"/>
</dbReference>
<dbReference type="InterPro" id="IPR023672">
    <property type="entry name" value="Ribosomal_uL2_arc_euk"/>
</dbReference>
<dbReference type="InterPro" id="IPR022669">
    <property type="entry name" value="Ribosomal_uL2_C"/>
</dbReference>
<dbReference type="InterPro" id="IPR014726">
    <property type="entry name" value="Ribosomal_uL2_dom3"/>
</dbReference>
<dbReference type="InterPro" id="IPR022666">
    <property type="entry name" value="Ribosomal_uL2_RNA-bd_dom"/>
</dbReference>
<dbReference type="InterPro" id="IPR008991">
    <property type="entry name" value="Translation_prot_SH3-like_sf"/>
</dbReference>
<dbReference type="NCBIfam" id="NF007180">
    <property type="entry name" value="PRK09612.1"/>
    <property type="match status" value="1"/>
</dbReference>
<dbReference type="PANTHER" id="PTHR13691:SF16">
    <property type="entry name" value="LARGE RIBOSOMAL SUBUNIT PROTEIN UL2"/>
    <property type="match status" value="1"/>
</dbReference>
<dbReference type="PANTHER" id="PTHR13691">
    <property type="entry name" value="RIBOSOMAL PROTEIN L2"/>
    <property type="match status" value="1"/>
</dbReference>
<dbReference type="Pfam" id="PF00181">
    <property type="entry name" value="Ribosomal_L2"/>
    <property type="match status" value="1"/>
</dbReference>
<dbReference type="Pfam" id="PF03947">
    <property type="entry name" value="Ribosomal_L2_C"/>
    <property type="match status" value="1"/>
</dbReference>
<dbReference type="PIRSF" id="PIRSF002158">
    <property type="entry name" value="Ribosomal_L2"/>
    <property type="match status" value="1"/>
</dbReference>
<dbReference type="SMART" id="SM01383">
    <property type="entry name" value="Ribosomal_L2"/>
    <property type="match status" value="1"/>
</dbReference>
<dbReference type="SMART" id="SM01382">
    <property type="entry name" value="Ribosomal_L2_C"/>
    <property type="match status" value="1"/>
</dbReference>
<dbReference type="SUPFAM" id="SSF50249">
    <property type="entry name" value="Nucleic acid-binding proteins"/>
    <property type="match status" value="1"/>
</dbReference>
<dbReference type="SUPFAM" id="SSF50104">
    <property type="entry name" value="Translation proteins SH3-like domain"/>
    <property type="match status" value="1"/>
</dbReference>
<evidence type="ECO:0000255" key="1">
    <source>
        <dbReference type="HAMAP-Rule" id="MF_01320"/>
    </source>
</evidence>
<evidence type="ECO:0000256" key="2">
    <source>
        <dbReference type="SAM" id="MobiDB-lite"/>
    </source>
</evidence>
<evidence type="ECO:0000305" key="3"/>
<comment type="function">
    <text evidence="1">One of the primary rRNA binding proteins. Required for association of the 30S and 50S subunits to form the 70S ribosome, for tRNA binding and peptide bond formation. It has been suggested to have peptidyltransferase activity; this is somewhat controversial. Makes several contacts with the 16S rRNA in the 70S ribosome.</text>
</comment>
<comment type="subunit">
    <text evidence="1">Part of the 50S ribosomal subunit. Forms a bridge to the 30S subunit in the 70S ribosome.</text>
</comment>
<comment type="similarity">
    <text evidence="1">Belongs to the universal ribosomal protein uL2 family.</text>
</comment>
<name>RL2_PYRIL</name>
<protein>
    <recommendedName>
        <fullName evidence="1">Large ribosomal subunit protein uL2</fullName>
    </recommendedName>
    <alternativeName>
        <fullName evidence="3">50S ribosomal protein L2</fullName>
    </alternativeName>
</protein>
<reference key="1">
    <citation type="submission" date="2006-12" db="EMBL/GenBank/DDBJ databases">
        <title>Complete sequence of Pyrobaculum islandicum DSM 4184.</title>
        <authorList>
            <person name="Copeland A."/>
            <person name="Lucas S."/>
            <person name="Lapidus A."/>
            <person name="Barry K."/>
            <person name="Detter J.C."/>
            <person name="Glavina del Rio T."/>
            <person name="Dalin E."/>
            <person name="Tice H."/>
            <person name="Pitluck S."/>
            <person name="Meincke L."/>
            <person name="Brettin T."/>
            <person name="Bruce D."/>
            <person name="Han C."/>
            <person name="Tapia R."/>
            <person name="Gilna P."/>
            <person name="Schmutz J."/>
            <person name="Larimer F."/>
            <person name="Land M."/>
            <person name="Hauser L."/>
            <person name="Kyrpides N."/>
            <person name="Mikhailova N."/>
            <person name="Cozen A.E."/>
            <person name="Fitz-Gibbon S.T."/>
            <person name="House C.H."/>
            <person name="Saltikov C."/>
            <person name="Lowe T."/>
            <person name="Richardson P."/>
        </authorList>
    </citation>
    <scope>NUCLEOTIDE SEQUENCE [LARGE SCALE GENOMIC DNA]</scope>
    <source>
        <strain>DSM 4184 / JCM 9189 / GEO3</strain>
    </source>
</reference>
<accession>A1RTI4</accession>
<sequence>MGKRILVQRRGRGGSQFRSPSWKRDGPVRYPPLNVTVGRGYVVEILHEPGLNAPVARIRLENGVEFLNFAAEGLYVGQEIEVGDLAAPKTGNIVILGRVPEGTMVFNVEKRAGDGGKFARAGGTYAVVVGQKPEENKTIIRLPSGKVVEVDSRGRATVGIVAGGGRIEKPFLKAGKKYHRAKAKAWKYPTVRGKAMSPYAHPHGGGSHPKGGTPVPKTAPPGQKVGFYGSRCTGRGCVRARAQQKL</sequence>
<keyword id="KW-0687">Ribonucleoprotein</keyword>
<keyword id="KW-0689">Ribosomal protein</keyword>
<keyword id="KW-0694">RNA-binding</keyword>
<keyword id="KW-0699">rRNA-binding</keyword>